<dbReference type="EMBL" id="X07234">
    <property type="protein sequence ID" value="CAA30209.1"/>
    <property type="molecule type" value="Genomic_DNA"/>
</dbReference>
<dbReference type="PIR" id="S03242">
    <property type="entry name" value="S03242"/>
</dbReference>
<dbReference type="RefSeq" id="NP_039807.1">
    <property type="nucleotide sequence ID" value="NC_001338.1"/>
</dbReference>
<dbReference type="SMR" id="P20196"/>
<dbReference type="KEGG" id="vg:2559661"/>
<dbReference type="OrthoDB" id="15630at10239"/>
<dbReference type="Proteomes" id="UP000000854">
    <property type="component" value="Genome"/>
</dbReference>
<organismHost>
    <name type="scientific">Saccharolobus solfataricus</name>
    <name type="common">Sulfolobus solfataricus</name>
    <dbReference type="NCBI Taxonomy" id="2287"/>
</organismHost>
<reference key="1">
    <citation type="journal article" date="1991" name="Virology">
        <title>Complete nucleotide sequence of the virus SSV1 of the archaebacterium Sulfolobus shibatae.</title>
        <authorList>
            <person name="Palm P."/>
            <person name="Schleper C."/>
            <person name="Grampp B."/>
            <person name="Yeats S."/>
            <person name="McWilliam P."/>
            <person name="Reiter W.-D."/>
            <person name="Zillig W."/>
        </authorList>
    </citation>
    <scope>NUCLEOTIDE SEQUENCE [GENOMIC DNA]</scope>
</reference>
<reference key="2">
    <citation type="journal article" date="1999" name="Genetics">
        <title>Genetic requirements for the function of the archaeal virus SSV1 in Sulfolobus solfataricus: construction and testing of viral shuttle vectors.</title>
        <authorList>
            <person name="Stedman K.M."/>
            <person name="Schleper C."/>
            <person name="Rumpf E."/>
            <person name="Zillig W."/>
        </authorList>
    </citation>
    <scope>FUNCTION</scope>
</reference>
<name>A154_SSV1</name>
<organism>
    <name type="scientific">Sulfolobus spindle-shape virus 1</name>
    <name type="common">SSV1</name>
    <dbReference type="NCBI Taxonomy" id="244589"/>
    <lineage>
        <taxon>Viruses</taxon>
        <taxon>Viruses incertae sedis</taxon>
        <taxon>Fuselloviridae</taxon>
        <taxon>Alphafusellovirus</taxon>
    </lineage>
</organism>
<accession>P20196</accession>
<sequence>MAKKNGLTELEQLKKENEELRKKLEELEALINNDSDDDEELQEIENPYTVTNRAIDELVSPKDTMFYLSGNQISLILSAFEFARLPTYFGEEPVTELAEYAHKLKHYLVSKGGRGRRDILRVLRVSSGQTRENVNKSILKQLFDHGKEHEDEEE</sequence>
<protein>
    <recommendedName>
        <fullName>Uncharacterized protein A-154</fullName>
    </recommendedName>
</protein>
<proteinExistence type="predicted"/>
<keyword id="KW-1185">Reference proteome</keyword>
<evidence type="ECO:0000269" key="1">
    <source>
    </source>
</evidence>
<feature type="chain" id="PRO_0000223022" description="Uncharacterized protein A-154">
    <location>
        <begin position="1"/>
        <end position="154"/>
    </location>
</feature>
<gene>
    <name type="ORF">a154</name>
</gene>
<comment type="function">
    <text evidence="1">This protein may be involved in virus assembly. Essential for virus function.</text>
</comment>